<dbReference type="EC" id="2.7.4.25" evidence="1"/>
<dbReference type="EMBL" id="CP001043">
    <property type="protein sequence ID" value="ACC69934.1"/>
    <property type="molecule type" value="Genomic_DNA"/>
</dbReference>
<dbReference type="RefSeq" id="WP_012400154.1">
    <property type="nucleotide sequence ID" value="NC_010622.1"/>
</dbReference>
<dbReference type="SMR" id="B2JF05"/>
<dbReference type="STRING" id="391038.Bphy_0745"/>
<dbReference type="KEGG" id="bph:Bphy_0745"/>
<dbReference type="eggNOG" id="COG0283">
    <property type="taxonomic scope" value="Bacteria"/>
</dbReference>
<dbReference type="HOGENOM" id="CLU_079959_2_0_4"/>
<dbReference type="OrthoDB" id="9807434at2"/>
<dbReference type="Proteomes" id="UP000001192">
    <property type="component" value="Chromosome 1"/>
</dbReference>
<dbReference type="GO" id="GO:0005829">
    <property type="term" value="C:cytosol"/>
    <property type="evidence" value="ECO:0007669"/>
    <property type="project" value="TreeGrafter"/>
</dbReference>
<dbReference type="GO" id="GO:0005524">
    <property type="term" value="F:ATP binding"/>
    <property type="evidence" value="ECO:0007669"/>
    <property type="project" value="UniProtKB-UniRule"/>
</dbReference>
<dbReference type="GO" id="GO:0036430">
    <property type="term" value="F:CMP kinase activity"/>
    <property type="evidence" value="ECO:0007669"/>
    <property type="project" value="RHEA"/>
</dbReference>
<dbReference type="GO" id="GO:0036431">
    <property type="term" value="F:dCMP kinase activity"/>
    <property type="evidence" value="ECO:0007669"/>
    <property type="project" value="RHEA"/>
</dbReference>
<dbReference type="GO" id="GO:0015949">
    <property type="term" value="P:nucleobase-containing small molecule interconversion"/>
    <property type="evidence" value="ECO:0007669"/>
    <property type="project" value="TreeGrafter"/>
</dbReference>
<dbReference type="GO" id="GO:0006220">
    <property type="term" value="P:pyrimidine nucleotide metabolic process"/>
    <property type="evidence" value="ECO:0007669"/>
    <property type="project" value="UniProtKB-UniRule"/>
</dbReference>
<dbReference type="CDD" id="cd02020">
    <property type="entry name" value="CMPK"/>
    <property type="match status" value="1"/>
</dbReference>
<dbReference type="Gene3D" id="3.40.50.300">
    <property type="entry name" value="P-loop containing nucleotide triphosphate hydrolases"/>
    <property type="match status" value="1"/>
</dbReference>
<dbReference type="HAMAP" id="MF_00238">
    <property type="entry name" value="Cytidyl_kinase_type1"/>
    <property type="match status" value="1"/>
</dbReference>
<dbReference type="InterPro" id="IPR003136">
    <property type="entry name" value="Cytidylate_kin"/>
</dbReference>
<dbReference type="InterPro" id="IPR011994">
    <property type="entry name" value="Cytidylate_kinase_dom"/>
</dbReference>
<dbReference type="InterPro" id="IPR027417">
    <property type="entry name" value="P-loop_NTPase"/>
</dbReference>
<dbReference type="NCBIfam" id="TIGR00017">
    <property type="entry name" value="cmk"/>
    <property type="match status" value="1"/>
</dbReference>
<dbReference type="PANTHER" id="PTHR21299:SF2">
    <property type="entry name" value="CYTIDYLATE KINASE"/>
    <property type="match status" value="1"/>
</dbReference>
<dbReference type="PANTHER" id="PTHR21299">
    <property type="entry name" value="CYTIDYLATE KINASE/PANTOATE-BETA-ALANINE LIGASE"/>
    <property type="match status" value="1"/>
</dbReference>
<dbReference type="Pfam" id="PF02224">
    <property type="entry name" value="Cytidylate_kin"/>
    <property type="match status" value="1"/>
</dbReference>
<dbReference type="SUPFAM" id="SSF52540">
    <property type="entry name" value="P-loop containing nucleoside triphosphate hydrolases"/>
    <property type="match status" value="1"/>
</dbReference>
<name>KCY_PARP8</name>
<keyword id="KW-0067">ATP-binding</keyword>
<keyword id="KW-0963">Cytoplasm</keyword>
<keyword id="KW-0418">Kinase</keyword>
<keyword id="KW-0547">Nucleotide-binding</keyword>
<keyword id="KW-1185">Reference proteome</keyword>
<keyword id="KW-0808">Transferase</keyword>
<accession>B2JF05</accession>
<organism>
    <name type="scientific">Paraburkholderia phymatum (strain DSM 17167 / CIP 108236 / LMG 21445 / STM815)</name>
    <name type="common">Burkholderia phymatum</name>
    <dbReference type="NCBI Taxonomy" id="391038"/>
    <lineage>
        <taxon>Bacteria</taxon>
        <taxon>Pseudomonadati</taxon>
        <taxon>Pseudomonadota</taxon>
        <taxon>Betaproteobacteria</taxon>
        <taxon>Burkholderiales</taxon>
        <taxon>Burkholderiaceae</taxon>
        <taxon>Paraburkholderia</taxon>
    </lineage>
</organism>
<sequence length="228" mass="24539">MKPTRPFHQTPVITIDGPTASGKGTVAALVAAELGFHLLDSGALYRLAALASVRYDIAADDAEALAKLVGELHITFREGIAQLDGADVSTDIRAEEIGNRASAIAIHAPVRAALVARQRAFRKQPGLVADGRDMGTVIFPDAALKVFLTASVEARATRRHKQLIQKGFSANMDDLLRDLRERDERDSQRAAAPLKPAADAQLLDTSALSVDQAVEQVVQWYRALVPQS</sequence>
<feature type="chain" id="PRO_1000100654" description="Cytidylate kinase">
    <location>
        <begin position="1"/>
        <end position="228"/>
    </location>
</feature>
<feature type="binding site" evidence="1">
    <location>
        <begin position="17"/>
        <end position="25"/>
    </location>
    <ligand>
        <name>ATP</name>
        <dbReference type="ChEBI" id="CHEBI:30616"/>
    </ligand>
</feature>
<comment type="catalytic activity">
    <reaction evidence="1">
        <text>CMP + ATP = CDP + ADP</text>
        <dbReference type="Rhea" id="RHEA:11600"/>
        <dbReference type="ChEBI" id="CHEBI:30616"/>
        <dbReference type="ChEBI" id="CHEBI:58069"/>
        <dbReference type="ChEBI" id="CHEBI:60377"/>
        <dbReference type="ChEBI" id="CHEBI:456216"/>
        <dbReference type="EC" id="2.7.4.25"/>
    </reaction>
</comment>
<comment type="catalytic activity">
    <reaction evidence="1">
        <text>dCMP + ATP = dCDP + ADP</text>
        <dbReference type="Rhea" id="RHEA:25094"/>
        <dbReference type="ChEBI" id="CHEBI:30616"/>
        <dbReference type="ChEBI" id="CHEBI:57566"/>
        <dbReference type="ChEBI" id="CHEBI:58593"/>
        <dbReference type="ChEBI" id="CHEBI:456216"/>
        <dbReference type="EC" id="2.7.4.25"/>
    </reaction>
</comment>
<comment type="subcellular location">
    <subcellularLocation>
        <location evidence="1">Cytoplasm</location>
    </subcellularLocation>
</comment>
<comment type="similarity">
    <text evidence="1">Belongs to the cytidylate kinase family. Type 1 subfamily.</text>
</comment>
<evidence type="ECO:0000255" key="1">
    <source>
        <dbReference type="HAMAP-Rule" id="MF_00238"/>
    </source>
</evidence>
<proteinExistence type="inferred from homology"/>
<gene>
    <name evidence="1" type="primary">cmk</name>
    <name type="ordered locus">Bphy_0745</name>
</gene>
<protein>
    <recommendedName>
        <fullName evidence="1">Cytidylate kinase</fullName>
        <shortName evidence="1">CK</shortName>
        <ecNumber evidence="1">2.7.4.25</ecNumber>
    </recommendedName>
    <alternativeName>
        <fullName evidence="1">Cytidine monophosphate kinase</fullName>
        <shortName evidence="1">CMP kinase</shortName>
    </alternativeName>
</protein>
<reference key="1">
    <citation type="journal article" date="2014" name="Stand. Genomic Sci.">
        <title>Complete genome sequence of Burkholderia phymatum STM815(T), a broad host range and efficient nitrogen-fixing symbiont of Mimosa species.</title>
        <authorList>
            <person name="Moulin L."/>
            <person name="Klonowska A."/>
            <person name="Caroline B."/>
            <person name="Booth K."/>
            <person name="Vriezen J.A."/>
            <person name="Melkonian R."/>
            <person name="James E.K."/>
            <person name="Young J.P."/>
            <person name="Bena G."/>
            <person name="Hauser L."/>
            <person name="Land M."/>
            <person name="Kyrpides N."/>
            <person name="Bruce D."/>
            <person name="Chain P."/>
            <person name="Copeland A."/>
            <person name="Pitluck S."/>
            <person name="Woyke T."/>
            <person name="Lizotte-Waniewski M."/>
            <person name="Bristow J."/>
            <person name="Riley M."/>
        </authorList>
    </citation>
    <scope>NUCLEOTIDE SEQUENCE [LARGE SCALE GENOMIC DNA]</scope>
    <source>
        <strain>DSM 17167 / CIP 108236 / LMG 21445 / STM815</strain>
    </source>
</reference>